<reference key="1">
    <citation type="journal article" date="1997" name="Oncogene">
        <title>Rat maf related genes: specific expression in chondrocytes, lens and spinal cord.</title>
        <authorList>
            <person name="Sakai M."/>
            <person name="Imaki J."/>
            <person name="Yoshida K."/>
            <person name="Ogata A."/>
            <person name="Matsushima-Hibaya Y."/>
            <person name="Kuboki Y."/>
            <person name="Nishizawa M."/>
            <person name="Nishi S."/>
        </authorList>
    </citation>
    <scope>NUCLEOTIDE SEQUENCE [MRNA]</scope>
    <scope>FUNCTION</scope>
    <scope>TISSUE SPECIFICITY</scope>
    <scope>SUBCELLULAR LOCATION</scope>
    <scope>DEVELOPMENTAL STAGE</scope>
    <source>
        <strain>Wistar</strain>
        <tissue>Liver</tissue>
    </source>
</reference>
<reference key="2">
    <citation type="journal article" date="1997" name="Invest. Ophthalmol. Vis. Sci.">
        <title>Differential expression of maf-1 and maf-2 genes in the developing rat lens.</title>
        <authorList>
            <person name="Yoshida K."/>
            <person name="Imaki J."/>
            <person name="Koyama Y."/>
            <person name="Harada T."/>
            <person name="Shinmei Y."/>
            <person name="Oishi C."/>
            <person name="Matsushima-Hibiya Y."/>
            <person name="Matsuda A."/>
            <person name="Nishi S."/>
            <person name="Matsuda H."/>
            <person name="Sakai M."/>
        </authorList>
    </citation>
    <scope>TISSUE SPECIFICITY</scope>
</reference>
<sequence length="369" mass="38457">MASELAMNNSDLPTSPLAMEYVNDFDLMKFEVKKEPVETDRIISQCGRLIAGGSLSSTPMSTPCSSVPPSPSFSAPSPASGSEQKAHLEDYYWMTGYPQQLNPEALGFSPEDAVEALISNSHQLQGGFDGYARGAQQLAAAAGAGAGASLGGSGEEMGPAAAVVSAVIAAAAAQSGGAPHYHHHHHHATGHHHHPTAGAPGAAGSASASASGAGGAGGGGPASAGGGGGGGGGGTAGAGGALHPHHAAGGLHFDDRFSDEQLVTMSVRELNRQLRGVSKEEVIRLKQKRRTLKNRGYAQSCRFKRVQQRHVLESEKNQLLQQVDHLKQEISRLVRERDAYKEKYEKLVSSGFRENCSSSDNPSSPEFFM</sequence>
<evidence type="ECO:0000250" key="1"/>
<evidence type="ECO:0000250" key="2">
    <source>
        <dbReference type="UniProtKB" id="O75444"/>
    </source>
</evidence>
<evidence type="ECO:0000255" key="3">
    <source>
        <dbReference type="PROSITE-ProRule" id="PRU00978"/>
    </source>
</evidence>
<evidence type="ECO:0000256" key="4">
    <source>
        <dbReference type="SAM" id="MobiDB-lite"/>
    </source>
</evidence>
<evidence type="ECO:0000269" key="5">
    <source>
    </source>
</evidence>
<evidence type="ECO:0000269" key="6">
    <source>
    </source>
</evidence>
<evidence type="ECO:0000305" key="7"/>
<name>MAF_RAT</name>
<gene>
    <name type="primary">Maf</name>
    <name type="synonym">Maf2</name>
</gene>
<accession>P54844</accession>
<comment type="function">
    <text evidence="1 5">Acts as a transcriptional activator or repressor. When overexpressed, represses anti-oxidant response element (ARE)-mediated transcription. Involved either as an oncogene or as a tumor suppressor, depending on the cell context. Binds to the ARE sites of detoxifying enzyme gene promoters. Involved in embryonic lens fiber cell development. Recruits the transcriptional coactivators CREBBP and/or EP300 to crystallin promoters leading to up-regulation of crystallin gene during lens fiber cell differentiation. Activates the expression of IL4 in T-helper 2 (Th2) cells. Increases T-cell susceptibility to apoptosis by interacting with MYB and decreasing BCL2 expression. Together with PAX6, transactivates strongly the glucagon gene promoter through the G1 element. Activates transcription of the CD13 proximal promoter in endothelial cells. Represses transcription of the CD13 promoter in early stages of myelopoiesis by affecting the ETS1 and MYB cooperative interaction. Involved in the initial chondrocyte terminal differentiation and the disappearance of hypertrophic chondrocytes during endochondral bone development. Binds to the sequence 5'-[GT]G[GC]N[GT]NCTCAGNN-3' in the L7 promoter. Binds to the T-MARE (Maf response element) sites of lens-specific alpha- and beta-crystallin gene promoters. Binds element G1 on the glucagon promoter. Binds an AT-rich region adjacent to the TGC motif (atypical Maf response element) in the CD13 proximal promoter in endothelial cells. It may interact with additional basic-zipper proteins that determine a subtype of Maf-responsive element binding (By similarity).</text>
</comment>
<comment type="subunit">
    <text evidence="1">Homodimer or heterodimer with other bHLH-Zip transcription factors. Binds DNA as a homodimer or as a heterodimer. Heterotetramer of two MAF and two USF2. Interacts with PAX6; the interaction is direct. Interacts with MYB; interaction takes place weakly in normal T-cells and increases in T-cells following stimulation through the TCR engagement. Interacts with MYB; the ternary complex formed with MYB and the CD13 promoter is regulated in response to differentiating signals. Interacts with USF2; the interaction inhibits its DNA-binding activity on the L7 promoter. Interacts with CREBBP, EP300 and ETS1 (By similarity).</text>
</comment>
<comment type="subcellular location">
    <subcellularLocation>
        <location evidence="3 5">Nucleus</location>
    </subcellularLocation>
</comment>
<comment type="tissue specificity">
    <text evidence="5 6">Expressed in the muscle, uterus, intestine, kidney, liver and skin. Expressed in the lens epithelial and fiber cells.</text>
</comment>
<comment type="developmental stage">
    <text evidence="5">Expressed in lens cells at 12 dpc. Expressed in the cartilage of ribs and limbs, in the eyes and spinal cord at 15 dpc. Expressed in the outer equatorial epithelium and lens fibers at 16 dpc (at protein level). Expressed throughout the lens fiber cells at 13 and 16 dpc; not detected in the epithelium of the lens. In the eyes, confined to the lens; not detected in the retina at 15 dpc. In spinal cord, expressed in the dorsal and ventral part of the dorsal horn at 15 dpc. Predominantly expressed in post-mitotic cells.</text>
</comment>
<comment type="PTM">
    <text evidence="1">Ubiquitinated, leading to its degradation by the proteasome. Ubiquitination is triggered by glucocorticoids (By similarity).</text>
</comment>
<comment type="PTM">
    <text evidence="1">Phosphorylated by GSK3 and MAPK13 on serine and threonine residues. The phosphorylation status can serve to either stimulate or inhibit transcription (By similarity).</text>
</comment>
<comment type="similarity">
    <text evidence="7">Belongs to the bZIP family. Maf subfamily.</text>
</comment>
<proteinExistence type="evidence at protein level"/>
<dbReference type="EMBL" id="U56242">
    <property type="protein sequence ID" value="AAB50063.1"/>
    <property type="molecule type" value="mRNA"/>
</dbReference>
<dbReference type="RefSeq" id="NP_062191.1">
    <property type="nucleotide sequence ID" value="NM_019318.1"/>
</dbReference>
<dbReference type="SMR" id="P54844"/>
<dbReference type="FunCoup" id="P54844">
    <property type="interactions" value="174"/>
</dbReference>
<dbReference type="STRING" id="10116.ENSRNOP00000016577"/>
<dbReference type="PhosphoSitePlus" id="P54844"/>
<dbReference type="PaxDb" id="10116-ENSRNOP00000016577"/>
<dbReference type="GeneID" id="54267"/>
<dbReference type="KEGG" id="rno:54267"/>
<dbReference type="UCSC" id="RGD:3034">
    <property type="organism name" value="rat"/>
</dbReference>
<dbReference type="AGR" id="RGD:3034"/>
<dbReference type="CTD" id="4094"/>
<dbReference type="RGD" id="3034">
    <property type="gene designation" value="Maf"/>
</dbReference>
<dbReference type="eggNOG" id="KOG4196">
    <property type="taxonomic scope" value="Eukaryota"/>
</dbReference>
<dbReference type="InParanoid" id="P54844"/>
<dbReference type="OrthoDB" id="5974330at2759"/>
<dbReference type="PhylomeDB" id="P54844"/>
<dbReference type="PRO" id="PR:P54844"/>
<dbReference type="Proteomes" id="UP000002494">
    <property type="component" value="Unplaced"/>
</dbReference>
<dbReference type="GO" id="GO:0005737">
    <property type="term" value="C:cytoplasm"/>
    <property type="evidence" value="ECO:0000266"/>
    <property type="project" value="RGD"/>
</dbReference>
<dbReference type="GO" id="GO:0005634">
    <property type="term" value="C:nucleus"/>
    <property type="evidence" value="ECO:0000266"/>
    <property type="project" value="RGD"/>
</dbReference>
<dbReference type="GO" id="GO:0090575">
    <property type="term" value="C:RNA polymerase II transcription regulator complex"/>
    <property type="evidence" value="ECO:0000266"/>
    <property type="project" value="RGD"/>
</dbReference>
<dbReference type="GO" id="GO:0003677">
    <property type="term" value="F:DNA binding"/>
    <property type="evidence" value="ECO:0000266"/>
    <property type="project" value="RGD"/>
</dbReference>
<dbReference type="GO" id="GO:0001228">
    <property type="term" value="F:DNA-binding transcription activator activity, RNA polymerase II-specific"/>
    <property type="evidence" value="ECO:0000266"/>
    <property type="project" value="RGD"/>
</dbReference>
<dbReference type="GO" id="GO:0003700">
    <property type="term" value="F:DNA-binding transcription factor activity"/>
    <property type="evidence" value="ECO:0000266"/>
    <property type="project" value="RGD"/>
</dbReference>
<dbReference type="GO" id="GO:0000981">
    <property type="term" value="F:DNA-binding transcription factor activity, RNA polymerase II-specific"/>
    <property type="evidence" value="ECO:0000314"/>
    <property type="project" value="RGD"/>
</dbReference>
<dbReference type="GO" id="GO:0003690">
    <property type="term" value="F:double-stranded DNA binding"/>
    <property type="evidence" value="ECO:0000314"/>
    <property type="project" value="RGD"/>
</dbReference>
<dbReference type="GO" id="GO:0042802">
    <property type="term" value="F:identical protein binding"/>
    <property type="evidence" value="ECO:0000353"/>
    <property type="project" value="RGD"/>
</dbReference>
<dbReference type="GO" id="GO:0044877">
    <property type="term" value="F:protein-containing complex binding"/>
    <property type="evidence" value="ECO:0000314"/>
    <property type="project" value="RGD"/>
</dbReference>
<dbReference type="GO" id="GO:0000978">
    <property type="term" value="F:RNA polymerase II cis-regulatory region sequence-specific DNA binding"/>
    <property type="evidence" value="ECO:0000318"/>
    <property type="project" value="GO_Central"/>
</dbReference>
<dbReference type="GO" id="GO:0043565">
    <property type="term" value="F:sequence-specific DNA binding"/>
    <property type="evidence" value="ECO:0000266"/>
    <property type="project" value="RGD"/>
</dbReference>
<dbReference type="GO" id="GO:1990837">
    <property type="term" value="F:sequence-specific double-stranded DNA binding"/>
    <property type="evidence" value="ECO:0000266"/>
    <property type="project" value="RGD"/>
</dbReference>
<dbReference type="GO" id="GO:0048468">
    <property type="term" value="P:cell development"/>
    <property type="evidence" value="ECO:0000266"/>
    <property type="project" value="RGD"/>
</dbReference>
<dbReference type="GO" id="GO:0048839">
    <property type="term" value="P:inner ear development"/>
    <property type="evidence" value="ECO:0000266"/>
    <property type="project" value="RGD"/>
</dbReference>
<dbReference type="GO" id="GO:0002088">
    <property type="term" value="P:lens development in camera-type eye"/>
    <property type="evidence" value="ECO:0000266"/>
    <property type="project" value="RGD"/>
</dbReference>
<dbReference type="GO" id="GO:0070306">
    <property type="term" value="P:lens fiber cell differentiation"/>
    <property type="evidence" value="ECO:0000266"/>
    <property type="project" value="RGD"/>
</dbReference>
<dbReference type="GO" id="GO:0030219">
    <property type="term" value="P:megakaryocyte differentiation"/>
    <property type="evidence" value="ECO:0000266"/>
    <property type="project" value="RGD"/>
</dbReference>
<dbReference type="GO" id="GO:0000122">
    <property type="term" value="P:negative regulation of transcription by RNA polymerase II"/>
    <property type="evidence" value="ECO:0000266"/>
    <property type="project" value="RGD"/>
</dbReference>
<dbReference type="GO" id="GO:0010628">
    <property type="term" value="P:positive regulation of gene expression"/>
    <property type="evidence" value="ECO:0000266"/>
    <property type="project" value="RGD"/>
</dbReference>
<dbReference type="GO" id="GO:0045944">
    <property type="term" value="P:positive regulation of transcription by RNA polymerase II"/>
    <property type="evidence" value="ECO:0000314"/>
    <property type="project" value="RGD"/>
</dbReference>
<dbReference type="GO" id="GO:0032330">
    <property type="term" value="P:regulation of chondrocyte differentiation"/>
    <property type="evidence" value="ECO:0000266"/>
    <property type="project" value="RGD"/>
</dbReference>
<dbReference type="GO" id="GO:0006355">
    <property type="term" value="P:regulation of DNA-templated transcription"/>
    <property type="evidence" value="ECO:0000266"/>
    <property type="project" value="RGD"/>
</dbReference>
<dbReference type="GO" id="GO:0006357">
    <property type="term" value="P:regulation of transcription by RNA polymerase II"/>
    <property type="evidence" value="ECO:0000318"/>
    <property type="project" value="GO_Central"/>
</dbReference>
<dbReference type="CDD" id="cd14718">
    <property type="entry name" value="bZIP_Maf_large"/>
    <property type="match status" value="1"/>
</dbReference>
<dbReference type="FunFam" id="1.20.5.170:FF:000016">
    <property type="entry name" value="MAF bZIP transcription factor"/>
    <property type="match status" value="1"/>
</dbReference>
<dbReference type="Gene3D" id="1.20.5.170">
    <property type="match status" value="1"/>
</dbReference>
<dbReference type="InterPro" id="IPR004827">
    <property type="entry name" value="bZIP"/>
</dbReference>
<dbReference type="InterPro" id="IPR004826">
    <property type="entry name" value="bZIP_Maf"/>
</dbReference>
<dbReference type="InterPro" id="IPR046347">
    <property type="entry name" value="bZIP_sf"/>
</dbReference>
<dbReference type="InterPro" id="IPR013592">
    <property type="entry name" value="Maf_TF_N"/>
</dbReference>
<dbReference type="InterPro" id="IPR008917">
    <property type="entry name" value="TF_DNA-bd_sf"/>
</dbReference>
<dbReference type="InterPro" id="IPR024874">
    <property type="entry name" value="Transcription_factor_Maf_fam"/>
</dbReference>
<dbReference type="PANTHER" id="PTHR10129">
    <property type="entry name" value="TRANSCRIPTION FACTOR MAF"/>
    <property type="match status" value="1"/>
</dbReference>
<dbReference type="PANTHER" id="PTHR10129:SF9">
    <property type="entry name" value="TRANSCRIPTION FACTOR MAF"/>
    <property type="match status" value="1"/>
</dbReference>
<dbReference type="Pfam" id="PF03131">
    <property type="entry name" value="bZIP_Maf"/>
    <property type="match status" value="1"/>
</dbReference>
<dbReference type="Pfam" id="PF08383">
    <property type="entry name" value="Maf_N"/>
    <property type="match status" value="1"/>
</dbReference>
<dbReference type="SMART" id="SM00338">
    <property type="entry name" value="BRLZ"/>
    <property type="match status" value="1"/>
</dbReference>
<dbReference type="SUPFAM" id="SSF47454">
    <property type="entry name" value="A DNA-binding domain in eukaryotic transcription factors"/>
    <property type="match status" value="1"/>
</dbReference>
<dbReference type="SUPFAM" id="SSF57959">
    <property type="entry name" value="Leucine zipper domain"/>
    <property type="match status" value="1"/>
</dbReference>
<dbReference type="PROSITE" id="PS50217">
    <property type="entry name" value="BZIP"/>
    <property type="match status" value="1"/>
</dbReference>
<feature type="chain" id="PRO_0000076493" description="Transcription factor Maf">
    <location>
        <begin position="1"/>
        <end position="369"/>
    </location>
</feature>
<feature type="domain" description="bZIP" evidence="3">
    <location>
        <begin position="284"/>
        <end position="347"/>
    </location>
</feature>
<feature type="region of interest" description="Disordered" evidence="4">
    <location>
        <begin position="57"/>
        <end position="82"/>
    </location>
</feature>
<feature type="region of interest" description="Represses ARE-mediated transcription" evidence="1">
    <location>
        <begin position="126"/>
        <end position="369"/>
    </location>
</feature>
<feature type="region of interest" description="Disordered" evidence="4">
    <location>
        <begin position="175"/>
        <end position="243"/>
    </location>
</feature>
<feature type="region of interest" description="Basic motif" evidence="3">
    <location>
        <begin position="284"/>
        <end position="309"/>
    </location>
</feature>
<feature type="region of interest" description="Leucine-zipper" evidence="3">
    <location>
        <begin position="312"/>
        <end position="333"/>
    </location>
</feature>
<feature type="compositionally biased region" description="Low complexity" evidence="4">
    <location>
        <begin position="72"/>
        <end position="82"/>
    </location>
</feature>
<feature type="compositionally biased region" description="Basic residues" evidence="4">
    <location>
        <begin position="180"/>
        <end position="195"/>
    </location>
</feature>
<feature type="compositionally biased region" description="Low complexity" evidence="4">
    <location>
        <begin position="196"/>
        <end position="211"/>
    </location>
</feature>
<feature type="compositionally biased region" description="Gly residues" evidence="4">
    <location>
        <begin position="212"/>
        <end position="240"/>
    </location>
</feature>
<feature type="cross-link" description="Glycyl lysine isopeptide (Lys-Gly) (interchain with G-Cter in SUMO2)" evidence="2">
    <location>
        <position position="29"/>
    </location>
</feature>
<feature type="cross-link" description="Glycyl lysine isopeptide (Lys-Gly) (interchain with G-Cter in SUMO2)" evidence="2">
    <location>
        <position position="33"/>
    </location>
</feature>
<feature type="cross-link" description="Glycyl lysine isopeptide (Lys-Gly) (interchain with G-Cter in SUMO2)" evidence="2">
    <location>
        <position position="327"/>
    </location>
</feature>
<organism>
    <name type="scientific">Rattus norvegicus</name>
    <name type="common">Rat</name>
    <dbReference type="NCBI Taxonomy" id="10116"/>
    <lineage>
        <taxon>Eukaryota</taxon>
        <taxon>Metazoa</taxon>
        <taxon>Chordata</taxon>
        <taxon>Craniata</taxon>
        <taxon>Vertebrata</taxon>
        <taxon>Euteleostomi</taxon>
        <taxon>Mammalia</taxon>
        <taxon>Eutheria</taxon>
        <taxon>Euarchontoglires</taxon>
        <taxon>Glires</taxon>
        <taxon>Rodentia</taxon>
        <taxon>Myomorpha</taxon>
        <taxon>Muroidea</taxon>
        <taxon>Muridae</taxon>
        <taxon>Murinae</taxon>
        <taxon>Rattus</taxon>
    </lineage>
</organism>
<protein>
    <recommendedName>
        <fullName>Transcription factor Maf</fullName>
    </recommendedName>
    <alternativeName>
        <fullName>Proto-oncogene c-Maf</fullName>
    </alternativeName>
    <alternativeName>
        <fullName>Transcription factor Maf-2</fullName>
    </alternativeName>
    <alternativeName>
        <fullName>V-maf musculoaponeurotic fibrosarcoma oncogene homolog</fullName>
    </alternativeName>
</protein>
<keyword id="KW-0010">Activator</keyword>
<keyword id="KW-0238">DNA-binding</keyword>
<keyword id="KW-1017">Isopeptide bond</keyword>
<keyword id="KW-0539">Nucleus</keyword>
<keyword id="KW-0656">Proto-oncogene</keyword>
<keyword id="KW-1185">Reference proteome</keyword>
<keyword id="KW-0678">Repressor</keyword>
<keyword id="KW-0804">Transcription</keyword>
<keyword id="KW-0805">Transcription regulation</keyword>
<keyword id="KW-0043">Tumor suppressor</keyword>
<keyword id="KW-0832">Ubl conjugation</keyword>